<organism>
    <name type="scientific">Xanthomonas campestris pv. campestris (strain ATCC 33913 / DSM 3586 / NCPPB 528 / LMG 568 / P 25)</name>
    <dbReference type="NCBI Taxonomy" id="190485"/>
    <lineage>
        <taxon>Bacteria</taxon>
        <taxon>Pseudomonadati</taxon>
        <taxon>Pseudomonadota</taxon>
        <taxon>Gammaproteobacteria</taxon>
        <taxon>Lysobacterales</taxon>
        <taxon>Lysobacteraceae</taxon>
        <taxon>Xanthomonas</taxon>
    </lineage>
</organism>
<name>NUOI_XANCP</name>
<dbReference type="EC" id="7.1.1.-" evidence="1"/>
<dbReference type="EMBL" id="AE008922">
    <property type="protein sequence ID" value="AAM41793.1"/>
    <property type="molecule type" value="Genomic_DNA"/>
</dbReference>
<dbReference type="RefSeq" id="NP_637869.1">
    <property type="nucleotide sequence ID" value="NC_003902.1"/>
</dbReference>
<dbReference type="SMR" id="Q8P7U0"/>
<dbReference type="STRING" id="190485.XCC2520"/>
<dbReference type="EnsemblBacteria" id="AAM41793">
    <property type="protein sequence ID" value="AAM41793"/>
    <property type="gene ID" value="XCC2520"/>
</dbReference>
<dbReference type="KEGG" id="xcc:XCC2520"/>
<dbReference type="PATRIC" id="fig|190485.4.peg.2686"/>
<dbReference type="eggNOG" id="COG1143">
    <property type="taxonomic scope" value="Bacteria"/>
</dbReference>
<dbReference type="HOGENOM" id="CLU_067218_5_1_6"/>
<dbReference type="OrthoDB" id="9808559at2"/>
<dbReference type="Proteomes" id="UP000001010">
    <property type="component" value="Chromosome"/>
</dbReference>
<dbReference type="GO" id="GO:0005886">
    <property type="term" value="C:plasma membrane"/>
    <property type="evidence" value="ECO:0007669"/>
    <property type="project" value="UniProtKB-SubCell"/>
</dbReference>
<dbReference type="GO" id="GO:0045271">
    <property type="term" value="C:respiratory chain complex I"/>
    <property type="evidence" value="ECO:0000318"/>
    <property type="project" value="GO_Central"/>
</dbReference>
<dbReference type="GO" id="GO:0051539">
    <property type="term" value="F:4 iron, 4 sulfur cluster binding"/>
    <property type="evidence" value="ECO:0007669"/>
    <property type="project" value="UniProtKB-KW"/>
</dbReference>
<dbReference type="GO" id="GO:0005506">
    <property type="term" value="F:iron ion binding"/>
    <property type="evidence" value="ECO:0007669"/>
    <property type="project" value="UniProtKB-UniRule"/>
</dbReference>
<dbReference type="GO" id="GO:0050136">
    <property type="term" value="F:NADH:ubiquinone reductase (non-electrogenic) activity"/>
    <property type="evidence" value="ECO:0007669"/>
    <property type="project" value="UniProtKB-UniRule"/>
</dbReference>
<dbReference type="GO" id="GO:0048038">
    <property type="term" value="F:quinone binding"/>
    <property type="evidence" value="ECO:0007669"/>
    <property type="project" value="UniProtKB-KW"/>
</dbReference>
<dbReference type="GO" id="GO:0009060">
    <property type="term" value="P:aerobic respiration"/>
    <property type="evidence" value="ECO:0000318"/>
    <property type="project" value="GO_Central"/>
</dbReference>
<dbReference type="FunFam" id="3.30.70.3270:FF:000003">
    <property type="entry name" value="NADH-quinone oxidoreductase subunit I"/>
    <property type="match status" value="1"/>
</dbReference>
<dbReference type="Gene3D" id="3.30.70.3270">
    <property type="match status" value="1"/>
</dbReference>
<dbReference type="HAMAP" id="MF_01351">
    <property type="entry name" value="NDH1_NuoI"/>
    <property type="match status" value="1"/>
</dbReference>
<dbReference type="InterPro" id="IPR017896">
    <property type="entry name" value="4Fe4S_Fe-S-bd"/>
</dbReference>
<dbReference type="InterPro" id="IPR017900">
    <property type="entry name" value="4Fe4S_Fe_S_CS"/>
</dbReference>
<dbReference type="InterPro" id="IPR010226">
    <property type="entry name" value="NADH_quinone_OxRdtase_chainI"/>
</dbReference>
<dbReference type="NCBIfam" id="TIGR01971">
    <property type="entry name" value="NuoI"/>
    <property type="match status" value="1"/>
</dbReference>
<dbReference type="NCBIfam" id="NF004538">
    <property type="entry name" value="PRK05888.1-4"/>
    <property type="match status" value="1"/>
</dbReference>
<dbReference type="NCBIfam" id="NF004539">
    <property type="entry name" value="PRK05888.1-5"/>
    <property type="match status" value="1"/>
</dbReference>
<dbReference type="PANTHER" id="PTHR10849:SF20">
    <property type="entry name" value="NADH DEHYDROGENASE [UBIQUINONE] IRON-SULFUR PROTEIN 8, MITOCHONDRIAL"/>
    <property type="match status" value="1"/>
</dbReference>
<dbReference type="PANTHER" id="PTHR10849">
    <property type="entry name" value="NADH DEHYDROGENASE UBIQUINONE IRON-SULFUR PROTEIN 8, MITOCHONDRIAL"/>
    <property type="match status" value="1"/>
</dbReference>
<dbReference type="Pfam" id="PF12838">
    <property type="entry name" value="Fer4_7"/>
    <property type="match status" value="1"/>
</dbReference>
<dbReference type="SUPFAM" id="SSF54862">
    <property type="entry name" value="4Fe-4S ferredoxins"/>
    <property type="match status" value="1"/>
</dbReference>
<dbReference type="PROSITE" id="PS00198">
    <property type="entry name" value="4FE4S_FER_1"/>
    <property type="match status" value="2"/>
</dbReference>
<dbReference type="PROSITE" id="PS51379">
    <property type="entry name" value="4FE4S_FER_2"/>
    <property type="match status" value="2"/>
</dbReference>
<proteinExistence type="inferred from homology"/>
<comment type="function">
    <text evidence="1">NDH-1 shuttles electrons from NADH, via FMN and iron-sulfur (Fe-S) centers, to quinones in the respiratory chain. The immediate electron acceptor for the enzyme in this species is believed to be ubiquinone. Couples the redox reaction to proton translocation (for every two electrons transferred, four hydrogen ions are translocated across the cytoplasmic membrane), and thus conserves the redox energy in a proton gradient.</text>
</comment>
<comment type="catalytic activity">
    <reaction evidence="1">
        <text>a quinone + NADH + 5 H(+)(in) = a quinol + NAD(+) + 4 H(+)(out)</text>
        <dbReference type="Rhea" id="RHEA:57888"/>
        <dbReference type="ChEBI" id="CHEBI:15378"/>
        <dbReference type="ChEBI" id="CHEBI:24646"/>
        <dbReference type="ChEBI" id="CHEBI:57540"/>
        <dbReference type="ChEBI" id="CHEBI:57945"/>
        <dbReference type="ChEBI" id="CHEBI:132124"/>
    </reaction>
</comment>
<comment type="cofactor">
    <cofactor evidence="1">
        <name>[4Fe-4S] cluster</name>
        <dbReference type="ChEBI" id="CHEBI:49883"/>
    </cofactor>
    <text evidence="1">Binds 2 [4Fe-4S] clusters per subunit.</text>
</comment>
<comment type="subunit">
    <text evidence="1">NDH-1 is composed of 14 different subunits. Subunits NuoA, H, J, K, L, M, N constitute the membrane sector of the complex.</text>
</comment>
<comment type="subcellular location">
    <subcellularLocation>
        <location evidence="1">Cell inner membrane</location>
        <topology evidence="1">Peripheral membrane protein</topology>
    </subcellularLocation>
</comment>
<comment type="similarity">
    <text evidence="1">Belongs to the complex I 23 kDa subunit family.</text>
</comment>
<protein>
    <recommendedName>
        <fullName evidence="1">NADH-quinone oxidoreductase subunit I</fullName>
        <ecNumber evidence="1">7.1.1.-</ecNumber>
    </recommendedName>
    <alternativeName>
        <fullName evidence="1">NADH dehydrogenase I subunit I</fullName>
    </alternativeName>
    <alternativeName>
        <fullName evidence="1">NDH-1 subunit I</fullName>
    </alternativeName>
</protein>
<feature type="chain" id="PRO_0000250951" description="NADH-quinone oxidoreductase subunit I">
    <location>
        <begin position="1"/>
        <end position="163"/>
    </location>
</feature>
<feature type="domain" description="4Fe-4S ferredoxin-type 1" evidence="1">
    <location>
        <begin position="54"/>
        <end position="84"/>
    </location>
</feature>
<feature type="domain" description="4Fe-4S ferredoxin-type 2" evidence="1">
    <location>
        <begin position="94"/>
        <end position="123"/>
    </location>
</feature>
<feature type="binding site" evidence="1">
    <location>
        <position position="64"/>
    </location>
    <ligand>
        <name>[4Fe-4S] cluster</name>
        <dbReference type="ChEBI" id="CHEBI:49883"/>
        <label>1</label>
    </ligand>
</feature>
<feature type="binding site" evidence="1">
    <location>
        <position position="67"/>
    </location>
    <ligand>
        <name>[4Fe-4S] cluster</name>
        <dbReference type="ChEBI" id="CHEBI:49883"/>
        <label>1</label>
    </ligand>
</feature>
<feature type="binding site" evidence="1">
    <location>
        <position position="70"/>
    </location>
    <ligand>
        <name>[4Fe-4S] cluster</name>
        <dbReference type="ChEBI" id="CHEBI:49883"/>
        <label>1</label>
    </ligand>
</feature>
<feature type="binding site" evidence="1">
    <location>
        <position position="74"/>
    </location>
    <ligand>
        <name>[4Fe-4S] cluster</name>
        <dbReference type="ChEBI" id="CHEBI:49883"/>
        <label>2</label>
    </ligand>
</feature>
<feature type="binding site" evidence="1">
    <location>
        <position position="103"/>
    </location>
    <ligand>
        <name>[4Fe-4S] cluster</name>
        <dbReference type="ChEBI" id="CHEBI:49883"/>
        <label>2</label>
    </ligand>
</feature>
<feature type="binding site" evidence="1">
    <location>
        <position position="106"/>
    </location>
    <ligand>
        <name>[4Fe-4S] cluster</name>
        <dbReference type="ChEBI" id="CHEBI:49883"/>
        <label>2</label>
    </ligand>
</feature>
<feature type="binding site" evidence="1">
    <location>
        <position position="109"/>
    </location>
    <ligand>
        <name>[4Fe-4S] cluster</name>
        <dbReference type="ChEBI" id="CHEBI:49883"/>
        <label>2</label>
    </ligand>
</feature>
<feature type="binding site" evidence="1">
    <location>
        <position position="113"/>
    </location>
    <ligand>
        <name>[4Fe-4S] cluster</name>
        <dbReference type="ChEBI" id="CHEBI:49883"/>
        <label>1</label>
    </ligand>
</feature>
<reference key="1">
    <citation type="journal article" date="2002" name="Nature">
        <title>Comparison of the genomes of two Xanthomonas pathogens with differing host specificities.</title>
        <authorList>
            <person name="da Silva A.C.R."/>
            <person name="Ferro J.A."/>
            <person name="Reinach F.C."/>
            <person name="Farah C.S."/>
            <person name="Furlan L.R."/>
            <person name="Quaggio R.B."/>
            <person name="Monteiro-Vitorello C.B."/>
            <person name="Van Sluys M.A."/>
            <person name="Almeida N.F. Jr."/>
            <person name="Alves L.M.C."/>
            <person name="do Amaral A.M."/>
            <person name="Bertolini M.C."/>
            <person name="Camargo L.E.A."/>
            <person name="Camarotte G."/>
            <person name="Cannavan F."/>
            <person name="Cardozo J."/>
            <person name="Chambergo F."/>
            <person name="Ciapina L.P."/>
            <person name="Cicarelli R.M.B."/>
            <person name="Coutinho L.L."/>
            <person name="Cursino-Santos J.R."/>
            <person name="El-Dorry H."/>
            <person name="Faria J.B."/>
            <person name="Ferreira A.J.S."/>
            <person name="Ferreira R.C.C."/>
            <person name="Ferro M.I.T."/>
            <person name="Formighieri E.F."/>
            <person name="Franco M.C."/>
            <person name="Greggio C.C."/>
            <person name="Gruber A."/>
            <person name="Katsuyama A.M."/>
            <person name="Kishi L.T."/>
            <person name="Leite R.P."/>
            <person name="Lemos E.G.M."/>
            <person name="Lemos M.V.F."/>
            <person name="Locali E.C."/>
            <person name="Machado M.A."/>
            <person name="Madeira A.M.B.N."/>
            <person name="Martinez-Rossi N.M."/>
            <person name="Martins E.C."/>
            <person name="Meidanis J."/>
            <person name="Menck C.F.M."/>
            <person name="Miyaki C.Y."/>
            <person name="Moon D.H."/>
            <person name="Moreira L.M."/>
            <person name="Novo M.T.M."/>
            <person name="Okura V.K."/>
            <person name="Oliveira M.C."/>
            <person name="Oliveira V.R."/>
            <person name="Pereira H.A."/>
            <person name="Rossi A."/>
            <person name="Sena J.A.D."/>
            <person name="Silva C."/>
            <person name="de Souza R.F."/>
            <person name="Spinola L.A.F."/>
            <person name="Takita M.A."/>
            <person name="Tamura R.E."/>
            <person name="Teixeira E.C."/>
            <person name="Tezza R.I.D."/>
            <person name="Trindade dos Santos M."/>
            <person name="Truffi D."/>
            <person name="Tsai S.M."/>
            <person name="White F.F."/>
            <person name="Setubal J.C."/>
            <person name="Kitajima J.P."/>
        </authorList>
    </citation>
    <scope>NUCLEOTIDE SEQUENCE [LARGE SCALE GENOMIC DNA]</scope>
    <source>
        <strain>ATCC 33913 / DSM 3586 / NCPPB 528 / LMG 568 / P 25</strain>
    </source>
</reference>
<gene>
    <name evidence="1" type="primary">nuoI</name>
    <name type="ordered locus">XCC2520</name>
</gene>
<sequence length="163" mass="18883">MMNKITHYFKSLLLLELLGGLWLTLKYTFKPKYTVLYPMEKFPQSPRFRGLHALRRYPNGEERCIACKLCEAVCPALAITIDSAKREDGTRRTTRYDIDLFKCIFCGFCEESCPVDSIVETHILEYHFEKRGENIVNKPQLLAIGDRLEAEIAERRAADAAFR</sequence>
<keyword id="KW-0004">4Fe-4S</keyword>
<keyword id="KW-0997">Cell inner membrane</keyword>
<keyword id="KW-1003">Cell membrane</keyword>
<keyword id="KW-0408">Iron</keyword>
<keyword id="KW-0411">Iron-sulfur</keyword>
<keyword id="KW-0472">Membrane</keyword>
<keyword id="KW-0479">Metal-binding</keyword>
<keyword id="KW-0520">NAD</keyword>
<keyword id="KW-0874">Quinone</keyword>
<keyword id="KW-1185">Reference proteome</keyword>
<keyword id="KW-0677">Repeat</keyword>
<keyword id="KW-1278">Translocase</keyword>
<keyword id="KW-0830">Ubiquinone</keyword>
<evidence type="ECO:0000255" key="1">
    <source>
        <dbReference type="HAMAP-Rule" id="MF_01351"/>
    </source>
</evidence>
<accession>Q8P7U0</accession>